<sequence length="757" mass="87069">MRERGEMREAKAPLIAEAAEHISHSHGSGSSGTGSHTSGGGGGWRGSRQYQRRSDALAYGNRYQKAAALVDLAEDGVGIPEDVLNDTRFERAMRFYFVYLRLDWLWSLNLFALILLNFLEKPLWCRGYSQHACDQRDLYFLGQLPYLSKTESLIYEGLTLVILVMDIFYPLSYEGLNLFWKNTINKLKVLLLFILACDILVFAFSPQPFRVAPYIRVAFLIMNIRELRMCAVTLVGMVGTYLNVLALSLLFLLFASWLAYVTFEDTPQGKTVFSSYGTTLYQMFILFTTSNNPDVWVPAYKSSRWSSLFFIVYVLLGVYFLTNLILAVIYDSFKEQLAKQVSQADCTRKSILEKAFGIIDATGQGYLNKEQCLSLLDELNKYRSLPKTSREDFELIFAELDQSGDFKVTSEEFATLCNTIAIKFQKEPPPSYLEKYPSFYHSALCEWLKSFVRSPLFEYIVIFVLLMNLVAVIIETTLDIENSSSQKVWQEVEFVFGWIYVIEMALKIFSLGFGAYWMEGQNKFDFVLTWTIFIGETLTFAFPSKLSFLSNGEWIRYLLLGRMLRLTRILLQVRRFRAFVATFFTLMSSLMPYLGIVFCTLCIYCSLGLQIFGGIVYAGNPTLEETDLFSNDYLLFNFNDYPSGMVTLFNLLVMGNWQAWMESYRQLTGSYWSLIYFVSFYLISVLLLLNLIVAFVLEAFFAEMELEKDGEADIQDPTLEGRNRRRSVRVRTKGTMVDILLHHMLSNELDGSQNRDQ</sequence>
<reference key="1">
    <citation type="journal article" date="2004" name="Plant Cell Physiol.">
        <title>Functional analysis of a rice putative voltage-dependent Ca2+ channel, OsTPC1, expressed in yeast cells lacking its homologous gene CCH1.</title>
        <authorList>
            <person name="Hashimoto K."/>
            <person name="Saito M."/>
            <person name="Matsuoka H."/>
            <person name="Iida K."/>
            <person name="Iida H."/>
        </authorList>
    </citation>
    <scope>NUCLEOTIDE SEQUENCE [MRNA]</scope>
    <scope>FUNCTION</scope>
    <scope>ACTIVITY REGULATION</scope>
    <scope>BIOPHYSICOCHEMICAL PROPERTIES</scope>
    <scope>SUBCELLULAR LOCATION</scope>
    <source>
        <strain>cv. Nipponbare</strain>
    </source>
</reference>
<reference key="2">
    <citation type="journal article" date="2004" name="Plant Cell Physiol.">
        <title>Identification of a putative voltage-gated Ca2+ -permeable channel (OsTPC1) involved in Ca2+ influx and regulation of growth and development in rice.</title>
        <authorList>
            <person name="Kurusu T."/>
            <person name="Sakurai Y."/>
            <person name="Miyao A."/>
            <person name="Hirochika H."/>
            <person name="Kuchitsu K."/>
        </authorList>
    </citation>
    <scope>NUCLEOTIDE SEQUENCE [MRNA]</scope>
    <scope>FUNCTION</scope>
    <scope>ACTIVITY REGULATION</scope>
    <scope>SUBCELLULAR LOCATION</scope>
    <scope>TISSUE SPECIFICITY</scope>
</reference>
<reference key="3">
    <citation type="journal article" date="2002" name="Nature">
        <title>The genome sequence and structure of rice chromosome 1.</title>
        <authorList>
            <person name="Sasaki T."/>
            <person name="Matsumoto T."/>
            <person name="Yamamoto K."/>
            <person name="Sakata K."/>
            <person name="Baba T."/>
            <person name="Katayose Y."/>
            <person name="Wu J."/>
            <person name="Niimura Y."/>
            <person name="Cheng Z."/>
            <person name="Nagamura Y."/>
            <person name="Antonio B.A."/>
            <person name="Kanamori H."/>
            <person name="Hosokawa S."/>
            <person name="Masukawa M."/>
            <person name="Arikawa K."/>
            <person name="Chiden Y."/>
            <person name="Hayashi M."/>
            <person name="Okamoto M."/>
            <person name="Ando T."/>
            <person name="Aoki H."/>
            <person name="Arita K."/>
            <person name="Hamada M."/>
            <person name="Harada C."/>
            <person name="Hijishita S."/>
            <person name="Honda M."/>
            <person name="Ichikawa Y."/>
            <person name="Idonuma A."/>
            <person name="Iijima M."/>
            <person name="Ikeda M."/>
            <person name="Ikeno M."/>
            <person name="Ito S."/>
            <person name="Ito T."/>
            <person name="Ito Y."/>
            <person name="Ito Y."/>
            <person name="Iwabuchi A."/>
            <person name="Kamiya K."/>
            <person name="Karasawa W."/>
            <person name="Katagiri S."/>
            <person name="Kikuta A."/>
            <person name="Kobayashi N."/>
            <person name="Kono I."/>
            <person name="Machita K."/>
            <person name="Maehara T."/>
            <person name="Mizuno H."/>
            <person name="Mizubayashi T."/>
            <person name="Mukai Y."/>
            <person name="Nagasaki H."/>
            <person name="Nakashima M."/>
            <person name="Nakama Y."/>
            <person name="Nakamichi Y."/>
            <person name="Nakamura M."/>
            <person name="Namiki N."/>
            <person name="Negishi M."/>
            <person name="Ohta I."/>
            <person name="Ono N."/>
            <person name="Saji S."/>
            <person name="Sakai K."/>
            <person name="Shibata M."/>
            <person name="Shimokawa T."/>
            <person name="Shomura A."/>
            <person name="Song J."/>
            <person name="Takazaki Y."/>
            <person name="Terasawa K."/>
            <person name="Tsuji K."/>
            <person name="Waki K."/>
            <person name="Yamagata H."/>
            <person name="Yamane H."/>
            <person name="Yoshiki S."/>
            <person name="Yoshihara R."/>
            <person name="Yukawa K."/>
            <person name="Zhong H."/>
            <person name="Iwama H."/>
            <person name="Endo T."/>
            <person name="Ito H."/>
            <person name="Hahn J.H."/>
            <person name="Kim H.-I."/>
            <person name="Eun M.-Y."/>
            <person name="Yano M."/>
            <person name="Jiang J."/>
            <person name="Gojobori T."/>
        </authorList>
    </citation>
    <scope>NUCLEOTIDE SEQUENCE [LARGE SCALE GENOMIC DNA]</scope>
    <source>
        <strain>cv. Nipponbare</strain>
    </source>
</reference>
<reference key="4">
    <citation type="journal article" date="2005" name="Nature">
        <title>The map-based sequence of the rice genome.</title>
        <authorList>
            <consortium name="International rice genome sequencing project (IRGSP)"/>
        </authorList>
    </citation>
    <scope>NUCLEOTIDE SEQUENCE [LARGE SCALE GENOMIC DNA]</scope>
    <source>
        <strain>cv. Nipponbare</strain>
    </source>
</reference>
<reference key="5">
    <citation type="journal article" date="2008" name="Nucleic Acids Res.">
        <title>The rice annotation project database (RAP-DB): 2008 update.</title>
        <authorList>
            <consortium name="The rice annotation project (RAP)"/>
        </authorList>
    </citation>
    <scope>GENOME REANNOTATION</scope>
    <source>
        <strain>cv. Nipponbare</strain>
    </source>
</reference>
<reference key="6">
    <citation type="journal article" date="2013" name="Rice">
        <title>Improvement of the Oryza sativa Nipponbare reference genome using next generation sequence and optical map data.</title>
        <authorList>
            <person name="Kawahara Y."/>
            <person name="de la Bastide M."/>
            <person name="Hamilton J.P."/>
            <person name="Kanamori H."/>
            <person name="McCombie W.R."/>
            <person name="Ouyang S."/>
            <person name="Schwartz D.C."/>
            <person name="Tanaka T."/>
            <person name="Wu J."/>
            <person name="Zhou S."/>
            <person name="Childs K.L."/>
            <person name="Davidson R.M."/>
            <person name="Lin H."/>
            <person name="Quesada-Ocampo L."/>
            <person name="Vaillancourt B."/>
            <person name="Sakai H."/>
            <person name="Lee S.S."/>
            <person name="Kim J."/>
            <person name="Numa H."/>
            <person name="Itoh T."/>
            <person name="Buell C.R."/>
            <person name="Matsumoto T."/>
        </authorList>
    </citation>
    <scope>GENOME REANNOTATION</scope>
    <source>
        <strain>cv. Nipponbare</strain>
    </source>
</reference>
<reference key="7">
    <citation type="journal article" date="2005" name="PLoS Biol.">
        <title>The genomes of Oryza sativa: a history of duplications.</title>
        <authorList>
            <person name="Yu J."/>
            <person name="Wang J."/>
            <person name="Lin W."/>
            <person name="Li S."/>
            <person name="Li H."/>
            <person name="Zhou J."/>
            <person name="Ni P."/>
            <person name="Dong W."/>
            <person name="Hu S."/>
            <person name="Zeng C."/>
            <person name="Zhang J."/>
            <person name="Zhang Y."/>
            <person name="Li R."/>
            <person name="Xu Z."/>
            <person name="Li S."/>
            <person name="Li X."/>
            <person name="Zheng H."/>
            <person name="Cong L."/>
            <person name="Lin L."/>
            <person name="Yin J."/>
            <person name="Geng J."/>
            <person name="Li G."/>
            <person name="Shi J."/>
            <person name="Liu J."/>
            <person name="Lv H."/>
            <person name="Li J."/>
            <person name="Wang J."/>
            <person name="Deng Y."/>
            <person name="Ran L."/>
            <person name="Shi X."/>
            <person name="Wang X."/>
            <person name="Wu Q."/>
            <person name="Li C."/>
            <person name="Ren X."/>
            <person name="Wang J."/>
            <person name="Wang X."/>
            <person name="Li D."/>
            <person name="Liu D."/>
            <person name="Zhang X."/>
            <person name="Ji Z."/>
            <person name="Zhao W."/>
            <person name="Sun Y."/>
            <person name="Zhang Z."/>
            <person name="Bao J."/>
            <person name="Han Y."/>
            <person name="Dong L."/>
            <person name="Ji J."/>
            <person name="Chen P."/>
            <person name="Wu S."/>
            <person name="Liu J."/>
            <person name="Xiao Y."/>
            <person name="Bu D."/>
            <person name="Tan J."/>
            <person name="Yang L."/>
            <person name="Ye C."/>
            <person name="Zhang J."/>
            <person name="Xu J."/>
            <person name="Zhou Y."/>
            <person name="Yu Y."/>
            <person name="Zhang B."/>
            <person name="Zhuang S."/>
            <person name="Wei H."/>
            <person name="Liu B."/>
            <person name="Lei M."/>
            <person name="Yu H."/>
            <person name="Li Y."/>
            <person name="Xu H."/>
            <person name="Wei S."/>
            <person name="He X."/>
            <person name="Fang L."/>
            <person name="Zhang Z."/>
            <person name="Zhang Y."/>
            <person name="Huang X."/>
            <person name="Su Z."/>
            <person name="Tong W."/>
            <person name="Li J."/>
            <person name="Tong Z."/>
            <person name="Li S."/>
            <person name="Ye J."/>
            <person name="Wang L."/>
            <person name="Fang L."/>
            <person name="Lei T."/>
            <person name="Chen C.-S."/>
            <person name="Chen H.-C."/>
            <person name="Xu Z."/>
            <person name="Li H."/>
            <person name="Huang H."/>
            <person name="Zhang F."/>
            <person name="Xu H."/>
            <person name="Li N."/>
            <person name="Zhao C."/>
            <person name="Li S."/>
            <person name="Dong L."/>
            <person name="Huang Y."/>
            <person name="Li L."/>
            <person name="Xi Y."/>
            <person name="Qi Q."/>
            <person name="Li W."/>
            <person name="Zhang B."/>
            <person name="Hu W."/>
            <person name="Zhang Y."/>
            <person name="Tian X."/>
            <person name="Jiao Y."/>
            <person name="Liang X."/>
            <person name="Jin J."/>
            <person name="Gao L."/>
            <person name="Zheng W."/>
            <person name="Hao B."/>
            <person name="Liu S.-M."/>
            <person name="Wang W."/>
            <person name="Yuan L."/>
            <person name="Cao M."/>
            <person name="McDermott J."/>
            <person name="Samudrala R."/>
            <person name="Wang J."/>
            <person name="Wong G.K.-S."/>
            <person name="Yang H."/>
        </authorList>
    </citation>
    <scope>NUCLEOTIDE SEQUENCE [LARGE SCALE GENOMIC DNA]</scope>
    <source>
        <strain>cv. Nipponbare</strain>
    </source>
</reference>
<reference key="8">
    <citation type="journal article" date="2005" name="Plant J.">
        <title>Identification of a putative voltage-gated Ca2+ channel as a key regulator of elicitor-induced hypersensitive cell death and mitogen-activated protein kinase activation in rice.</title>
        <authorList>
            <person name="Kurusu T."/>
            <person name="Yagala T."/>
            <person name="Miyao A."/>
            <person name="Hirochika H."/>
            <person name="Kuchitsu K."/>
        </authorList>
    </citation>
    <scope>FUNCTION</scope>
    <scope>SUBCELLULAR LOCATION</scope>
</reference>
<keyword id="KW-0106">Calcium</keyword>
<keyword id="KW-0107">Calcium channel</keyword>
<keyword id="KW-0109">Calcium transport</keyword>
<keyword id="KW-0325">Glycoprotein</keyword>
<keyword id="KW-0407">Ion channel</keyword>
<keyword id="KW-0406">Ion transport</keyword>
<keyword id="KW-0472">Membrane</keyword>
<keyword id="KW-0611">Plant defense</keyword>
<keyword id="KW-1185">Reference proteome</keyword>
<keyword id="KW-0677">Repeat</keyword>
<keyword id="KW-0812">Transmembrane</keyword>
<keyword id="KW-1133">Transmembrane helix</keyword>
<keyword id="KW-0813">Transport</keyword>
<keyword id="KW-0851">Voltage-gated channel</keyword>
<feature type="chain" id="PRO_0000053962" description="Two pore calcium channel protein 1">
    <location>
        <begin position="1"/>
        <end position="757"/>
    </location>
</feature>
<feature type="topological domain" description="Cytoplasmic" evidence="2">
    <location>
        <begin position="1"/>
        <end position="94"/>
    </location>
</feature>
<feature type="transmembrane region" description="Helical; Name=S1 of repeat I" evidence="2">
    <location>
        <begin position="95"/>
        <end position="115"/>
    </location>
</feature>
<feature type="topological domain" description="Extracellular" evidence="2">
    <location>
        <begin position="116"/>
        <end position="152"/>
    </location>
</feature>
<feature type="transmembrane region" description="Helical; Name=S2 of repeat I" evidence="2">
    <location>
        <begin position="153"/>
        <end position="173"/>
    </location>
</feature>
<feature type="topological domain" description="Cytoplasmic" evidence="2">
    <location>
        <begin position="174"/>
        <end position="188"/>
    </location>
</feature>
<feature type="transmembrane region" description="Helical; Name=S3 of repeat I" evidence="2">
    <location>
        <begin position="189"/>
        <end position="209"/>
    </location>
</feature>
<feature type="topological domain" description="Extracellular" evidence="2">
    <location>
        <position position="210"/>
    </location>
</feature>
<feature type="transmembrane region" description="Helical; Voltage-sensor; Name=S4 of repeat I" evidence="2">
    <location>
        <begin position="211"/>
        <end position="228"/>
    </location>
</feature>
<feature type="topological domain" description="Cytoplasmic" evidence="2">
    <location>
        <begin position="229"/>
        <end position="233"/>
    </location>
</feature>
<feature type="transmembrane region" description="Helical; Name=S5 of repeat I" evidence="2">
    <location>
        <begin position="234"/>
        <end position="254"/>
    </location>
</feature>
<feature type="topological domain" description="Extracellular" evidence="2">
    <location>
        <begin position="255"/>
        <end position="270"/>
    </location>
</feature>
<feature type="intramembrane region" description="Pore-forming; Name=Pore-forming 1">
    <location>
        <begin position="271"/>
        <end position="285"/>
    </location>
</feature>
<feature type="topological domain" description="Extracellular" evidence="2">
    <location>
        <begin position="286"/>
        <end position="308"/>
    </location>
</feature>
<feature type="transmembrane region" description="Helical; Name=S6 of repeat I" evidence="2">
    <location>
        <begin position="309"/>
        <end position="329"/>
    </location>
</feature>
<feature type="topological domain" description="Cytoplasmic" evidence="2">
    <location>
        <begin position="330"/>
        <end position="453"/>
    </location>
</feature>
<feature type="transmembrane region" description="Helical; Name=S1 of repeat II" evidence="2">
    <location>
        <begin position="454"/>
        <end position="474"/>
    </location>
</feature>
<feature type="topological domain" description="Extracellular" evidence="2">
    <location>
        <begin position="475"/>
        <end position="493"/>
    </location>
</feature>
<feature type="transmembrane region" description="Helical; Name=S2 of repeat II" evidence="2">
    <location>
        <begin position="494"/>
        <end position="514"/>
    </location>
</feature>
<feature type="topological domain" description="Cytoplasmic" evidence="2">
    <location>
        <begin position="515"/>
        <end position="523"/>
    </location>
</feature>
<feature type="transmembrane region" description="Helical; Name=S3 of repeat II" evidence="2">
    <location>
        <begin position="524"/>
        <end position="544"/>
    </location>
</feature>
<feature type="topological domain" description="Extracellular" evidence="2">
    <location>
        <begin position="545"/>
        <end position="553"/>
    </location>
</feature>
<feature type="transmembrane region" description="Helical; Voltage-sensor; Name=S4 of repeat II" evidence="2">
    <location>
        <begin position="554"/>
        <end position="571"/>
    </location>
</feature>
<feature type="topological domain" description="Cytoplasmic" evidence="2">
    <location>
        <begin position="572"/>
        <end position="595"/>
    </location>
</feature>
<feature type="transmembrane region" description="Helical; Name=S5 of repeat II" evidence="2">
    <location>
        <begin position="596"/>
        <end position="616"/>
    </location>
</feature>
<feature type="topological domain" description="Extracellular" evidence="2">
    <location>
        <begin position="617"/>
        <end position="640"/>
    </location>
</feature>
<feature type="intramembrane region" description="Pore-forming; Name=Pore-forming 2">
    <location>
        <begin position="641"/>
        <end position="655"/>
    </location>
</feature>
<feature type="topological domain" description="Extracellular" evidence="2">
    <location>
        <begin position="656"/>
        <end position="676"/>
    </location>
</feature>
<feature type="transmembrane region" description="Helical; Name=S6 of repeat II" evidence="2">
    <location>
        <begin position="677"/>
        <end position="697"/>
    </location>
</feature>
<feature type="topological domain" description="Cytoplasmic" evidence="2">
    <location>
        <begin position="698"/>
        <end position="757"/>
    </location>
</feature>
<feature type="domain" description="EF-hand 1" evidence="3">
    <location>
        <begin position="347"/>
        <end position="382"/>
    </location>
</feature>
<feature type="domain" description="EF-hand 2" evidence="3">
    <location>
        <begin position="388"/>
        <end position="423"/>
    </location>
</feature>
<feature type="region of interest" description="Disordered" evidence="4">
    <location>
        <begin position="24"/>
        <end position="48"/>
    </location>
</feature>
<feature type="compositionally biased region" description="Gly residues" evidence="4">
    <location>
        <begin position="29"/>
        <end position="45"/>
    </location>
</feature>
<feature type="glycosylation site" description="N-linked (GlcNAc...) asparagine" evidence="2">
    <location>
        <position position="482"/>
    </location>
</feature>
<feature type="sequence conflict" description="In Ref. 1; BAC80148." evidence="8" ref="1">
    <original>W</original>
    <variation>L</variation>
    <location>
        <position position="554"/>
    </location>
</feature>
<name>TPC1_ORYSJ</name>
<organism>
    <name type="scientific">Oryza sativa subsp. japonica</name>
    <name type="common">Rice</name>
    <dbReference type="NCBI Taxonomy" id="39947"/>
    <lineage>
        <taxon>Eukaryota</taxon>
        <taxon>Viridiplantae</taxon>
        <taxon>Streptophyta</taxon>
        <taxon>Embryophyta</taxon>
        <taxon>Tracheophyta</taxon>
        <taxon>Spermatophyta</taxon>
        <taxon>Magnoliopsida</taxon>
        <taxon>Liliopsida</taxon>
        <taxon>Poales</taxon>
        <taxon>Poaceae</taxon>
        <taxon>BOP clade</taxon>
        <taxon>Oryzoideae</taxon>
        <taxon>Oryzeae</taxon>
        <taxon>Oryzinae</taxon>
        <taxon>Oryza</taxon>
        <taxon>Oryza sativa</taxon>
    </lineage>
</organism>
<gene>
    <name type="primary">TPC1</name>
    <name type="ordered locus">Os01g0678500</name>
    <name type="ordered locus">LOC_Os01g48680</name>
    <name type="ORF">B1144G04.26-1</name>
    <name evidence="9" type="ORF">OsJ_03004</name>
</gene>
<accession>Q5QM84</accession>
<accession>B9EYL2</accession>
<accession>Q0JKF6</accession>
<accession>Q5QM85</accession>
<accession>Q7XB54</accession>
<accession>Q7XXT1</accession>
<proteinExistence type="evidence at protein level"/>
<comment type="function">
    <text evidence="5 6 7">May function as one of the major voltage-gated Ca(2+) channel (VDCC) across the plasma membrane. May be involved in the regulation of cytosolic Ca(2+) and in growth and development. Acts as the major ROS-responsive Ca(2+) channel and is the possible target of Al-dependent inhibition. Determines sensitivity to T.viride xylanase elicitor. Plays a regulatory role in elicitor-induced defense responses and hypersensitive cell death.</text>
</comment>
<comment type="activity regulation">
    <text evidence="1">Inhibited by the VDCC blocker verapamil in yeast cells. Channel activity may be down-regulated by cytosolic Ca(2+) in rice cells. Inhibited by Al(3+) (By similarity).</text>
</comment>
<comment type="biophysicochemical properties">
    <kinetics>
        <KM evidence="5">47.5 uM for Ca(2+) (at 30 degrees Celsius)</KM>
        <text>Measured in yeast knockout mutant cch1.</text>
    </kinetics>
</comment>
<comment type="subunit">
    <text evidence="8">Homodimer.</text>
</comment>
<comment type="subcellular location">
    <subcellularLocation>
        <location evidence="5 6 7">Membrane</location>
        <topology evidence="5 6 7">Multi-pass membrane protein</topology>
    </subcellularLocation>
</comment>
<comment type="tissue specificity">
    <text evidence="6">Expressed in shoot, mature leaf, cultured cells, and at lower level in roots.</text>
</comment>
<comment type="domain">
    <text evidence="1">Each of the two internal repeats contains five hydrophobic transmembrane segments (S1, S2, S3, S5, S6) and one positively charged transmembrane segment (S4). S4 segments probably represent the voltage-sensor and are characterized by a series of positively charged amino acids (By similarity).</text>
</comment>
<comment type="miscellaneous">
    <text>Rescues the Ca(2+) uptake activity in yeast mutant cch1. Plants overexpressing TPC1 display reduced growth rate and dwarf phenotype, and seedlings show greening of roots under light conditions. The highest overexpressor line shows most severe phenotype including a death symptom, possibly due to Ca(2+) accumulation to toxic level.</text>
</comment>
<comment type="similarity">
    <text evidence="8">Belongs to the calcium channel alpha-1 subunit (TC 1.A.1.11) family. Two pore calcium channel subfamily.</text>
</comment>
<comment type="sequence caution" evidence="8">
    <conflict type="erroneous gene model prediction">
        <sequence resource="EMBL-CDS" id="BAD73470"/>
    </conflict>
</comment>
<protein>
    <recommendedName>
        <fullName>Two pore calcium channel protein 1</fullName>
    </recommendedName>
    <alternativeName>
        <fullName>OsTPC1</fullName>
    </alternativeName>
    <alternativeName>
        <fullName>Voltage-dependent calcium channel protein TPC1</fullName>
    </alternativeName>
</protein>
<evidence type="ECO:0000250" key="1"/>
<evidence type="ECO:0000255" key="2"/>
<evidence type="ECO:0000255" key="3">
    <source>
        <dbReference type="PROSITE-ProRule" id="PRU00448"/>
    </source>
</evidence>
<evidence type="ECO:0000256" key="4">
    <source>
        <dbReference type="SAM" id="MobiDB-lite"/>
    </source>
</evidence>
<evidence type="ECO:0000269" key="5">
    <source>
    </source>
</evidence>
<evidence type="ECO:0000269" key="6">
    <source>
    </source>
</evidence>
<evidence type="ECO:0000269" key="7">
    <source>
    </source>
</evidence>
<evidence type="ECO:0000305" key="8"/>
<evidence type="ECO:0000312" key="9">
    <source>
        <dbReference type="EMBL" id="EEE55175.1"/>
    </source>
</evidence>
<dbReference type="EMBL" id="AB100696">
    <property type="protein sequence ID" value="BAC80148.1"/>
    <property type="molecule type" value="mRNA"/>
</dbReference>
<dbReference type="EMBL" id="AB071014">
    <property type="protein sequence ID" value="BAC78525.1"/>
    <property type="molecule type" value="mRNA"/>
</dbReference>
<dbReference type="EMBL" id="AP003335">
    <property type="protein sequence ID" value="BAD73469.1"/>
    <property type="molecule type" value="Genomic_DNA"/>
</dbReference>
<dbReference type="EMBL" id="AP003335">
    <property type="protein sequence ID" value="BAD73470.1"/>
    <property type="status" value="ALT_SEQ"/>
    <property type="molecule type" value="Genomic_DNA"/>
</dbReference>
<dbReference type="EMBL" id="AP008207">
    <property type="protein sequence ID" value="BAF05772.1"/>
    <property type="molecule type" value="Genomic_DNA"/>
</dbReference>
<dbReference type="EMBL" id="AP014957">
    <property type="protein sequence ID" value="BAS73676.1"/>
    <property type="molecule type" value="Genomic_DNA"/>
</dbReference>
<dbReference type="EMBL" id="CM000138">
    <property type="protein sequence ID" value="EEE55175.1"/>
    <property type="molecule type" value="Genomic_DNA"/>
</dbReference>
<dbReference type="RefSeq" id="XP_015621659.1">
    <property type="nucleotide sequence ID" value="XM_015766173.1"/>
</dbReference>
<dbReference type="SMR" id="Q5QM84"/>
<dbReference type="FunCoup" id="Q5QM84">
    <property type="interactions" value="408"/>
</dbReference>
<dbReference type="STRING" id="39947.Q5QM84"/>
<dbReference type="TCDB" id="1.A.1.11.13">
    <property type="family name" value="the voltage-gated ion channel (vic) superfamily"/>
</dbReference>
<dbReference type="GlyCosmos" id="Q5QM84">
    <property type="glycosylation" value="1 site, No reported glycans"/>
</dbReference>
<dbReference type="PaxDb" id="39947-Q5QM84"/>
<dbReference type="EnsemblPlants" id="Os01t0678500-01">
    <property type="protein sequence ID" value="Os01t0678500-01"/>
    <property type="gene ID" value="Os01g0678500"/>
</dbReference>
<dbReference type="EnsemblPlants" id="Os01t0678500-02">
    <property type="protein sequence ID" value="Os01t0678500-02"/>
    <property type="gene ID" value="Os01g0678500"/>
</dbReference>
<dbReference type="Gramene" id="Os01t0678500-01">
    <property type="protein sequence ID" value="Os01t0678500-01"/>
    <property type="gene ID" value="Os01g0678500"/>
</dbReference>
<dbReference type="Gramene" id="Os01t0678500-02">
    <property type="protein sequence ID" value="Os01t0678500-02"/>
    <property type="gene ID" value="Os01g0678500"/>
</dbReference>
<dbReference type="KEGG" id="dosa:Os01g0678500"/>
<dbReference type="eggNOG" id="KOG2301">
    <property type="taxonomic scope" value="Eukaryota"/>
</dbReference>
<dbReference type="HOGENOM" id="CLU_426053_0_0_1"/>
<dbReference type="InParanoid" id="Q5QM84"/>
<dbReference type="OMA" id="MCSTAIV"/>
<dbReference type="OrthoDB" id="416585at2759"/>
<dbReference type="Proteomes" id="UP000000763">
    <property type="component" value="Chromosome 1"/>
</dbReference>
<dbReference type="Proteomes" id="UP000007752">
    <property type="component" value="Chromosome 1"/>
</dbReference>
<dbReference type="Proteomes" id="UP000059680">
    <property type="component" value="Chromosome 1"/>
</dbReference>
<dbReference type="GO" id="GO:0034702">
    <property type="term" value="C:monoatomic ion channel complex"/>
    <property type="evidence" value="ECO:0007669"/>
    <property type="project" value="UniProtKB-KW"/>
</dbReference>
<dbReference type="GO" id="GO:0000325">
    <property type="term" value="C:plant-type vacuole"/>
    <property type="evidence" value="ECO:0000318"/>
    <property type="project" value="GO_Central"/>
</dbReference>
<dbReference type="GO" id="GO:0005774">
    <property type="term" value="C:vacuolar membrane"/>
    <property type="evidence" value="ECO:0000318"/>
    <property type="project" value="GO_Central"/>
</dbReference>
<dbReference type="GO" id="GO:0005509">
    <property type="term" value="F:calcium ion binding"/>
    <property type="evidence" value="ECO:0007669"/>
    <property type="project" value="InterPro"/>
</dbReference>
<dbReference type="GO" id="GO:0005245">
    <property type="term" value="F:voltage-gated calcium channel activity"/>
    <property type="evidence" value="ECO:0000318"/>
    <property type="project" value="GO_Central"/>
</dbReference>
<dbReference type="GO" id="GO:0006816">
    <property type="term" value="P:calcium ion transport"/>
    <property type="evidence" value="ECO:0000318"/>
    <property type="project" value="GO_Central"/>
</dbReference>
<dbReference type="GO" id="GO:0006952">
    <property type="term" value="P:defense response"/>
    <property type="evidence" value="ECO:0007669"/>
    <property type="project" value="UniProtKB-KW"/>
</dbReference>
<dbReference type="FunFam" id="1.10.238.10:FF:000253">
    <property type="entry name" value="Two pore calcium channel protein 1"/>
    <property type="match status" value="1"/>
</dbReference>
<dbReference type="FunFam" id="1.10.287.70:FF:000094">
    <property type="entry name" value="Two pore calcium channel protein 1"/>
    <property type="match status" value="1"/>
</dbReference>
<dbReference type="FunFam" id="1.10.287.70:FF:000129">
    <property type="entry name" value="Two pore calcium channel protein 1"/>
    <property type="match status" value="1"/>
</dbReference>
<dbReference type="FunFam" id="1.20.120.350:FF:000055">
    <property type="entry name" value="Two pore calcium channel protein 1"/>
    <property type="match status" value="1"/>
</dbReference>
<dbReference type="Gene3D" id="1.10.287.70">
    <property type="match status" value="2"/>
</dbReference>
<dbReference type="Gene3D" id="1.10.238.10">
    <property type="entry name" value="EF-hand"/>
    <property type="match status" value="1"/>
</dbReference>
<dbReference type="Gene3D" id="1.20.120.350">
    <property type="entry name" value="Voltage-gated potassium channels. Chain C"/>
    <property type="match status" value="1"/>
</dbReference>
<dbReference type="InterPro" id="IPR011992">
    <property type="entry name" value="EF-hand-dom_pair"/>
</dbReference>
<dbReference type="InterPro" id="IPR002048">
    <property type="entry name" value="EF_hand_dom"/>
</dbReference>
<dbReference type="InterPro" id="IPR005821">
    <property type="entry name" value="Ion_trans_dom"/>
</dbReference>
<dbReference type="InterPro" id="IPR044581">
    <property type="entry name" value="TPC1_plant"/>
</dbReference>
<dbReference type="InterPro" id="IPR027359">
    <property type="entry name" value="Volt_channel_dom_sf"/>
</dbReference>
<dbReference type="PANTHER" id="PTHR46988">
    <property type="entry name" value="TWO PORE CALCIUM CHANNEL PROTEIN 1"/>
    <property type="match status" value="1"/>
</dbReference>
<dbReference type="PANTHER" id="PTHR46988:SF2">
    <property type="entry name" value="TWO PORE CALCIUM CHANNEL PROTEIN 1"/>
    <property type="match status" value="1"/>
</dbReference>
<dbReference type="Pfam" id="PF00520">
    <property type="entry name" value="Ion_trans"/>
    <property type="match status" value="2"/>
</dbReference>
<dbReference type="SMART" id="SM00054">
    <property type="entry name" value="EFh"/>
    <property type="match status" value="2"/>
</dbReference>
<dbReference type="SUPFAM" id="SSF47473">
    <property type="entry name" value="EF-hand"/>
    <property type="match status" value="1"/>
</dbReference>
<dbReference type="SUPFAM" id="SSF81324">
    <property type="entry name" value="Voltage-gated potassium channels"/>
    <property type="match status" value="1"/>
</dbReference>
<dbReference type="PROSITE" id="PS50222">
    <property type="entry name" value="EF_HAND_2"/>
    <property type="match status" value="2"/>
</dbReference>